<accession>P22354</accession>
<accession>D6VXE5</accession>
<feature type="transit peptide" description="Mitochondrion" evidence="6">
    <location>
        <begin position="1"/>
        <end position="18"/>
    </location>
</feature>
<feature type="chain" id="PRO_0000030573" description="Large ribosomal subunit protein mL58">
    <location>
        <begin position="19"/>
        <end position="195"/>
    </location>
</feature>
<feature type="sequence conflict" description="In Ref. 1; CAA37833." evidence="10" ref="1">
    <original>R</original>
    <variation>H</variation>
    <location>
        <position position="187"/>
    </location>
</feature>
<comment type="function">
    <text evidence="11 12">Component of the mitochondrial ribosome (mitoribosome), a dedicated translation machinery responsible for the synthesis of mitochondrial genome-encoded proteins, including at least some of the essential transmembrane subunits of the mitochondrial respiratory chain. The mitoribosomes are attached to the mitochondrial inner membrane and translation products are cotranslationally integrated into the membrane.</text>
</comment>
<comment type="subunit">
    <text evidence="1 5 7">Component of the mitochondrial large ribosomal subunit (mt-LSU). Mature yeast 74S mitochondrial ribosomes consist of a small (37S) and a large (54S) subunit. The 37S small subunit contains a 15S ribosomal RNA (15S mt-rRNA) and 34 different proteins. The 54S large subunit contains a 21S rRNA (21S mt-rRNA) and 46 different proteins.</text>
</comment>
<comment type="subcellular location">
    <subcellularLocation>
        <location evidence="2 4">Mitochondrion</location>
    </subcellularLocation>
    <text evidence="8">Mitoribosomes are tethered to the mitochondrial inner membrane and spatially aligned with the membrane insertion machinery through two distinct membrane contact sites, formed by the 21S rRNA expansion segment 96-ES1 and the inner membrane protein MBA1.</text>
</comment>
<comment type="miscellaneous">
    <text evidence="3">Present with 350 molecules/cell in log phase SD medium.</text>
</comment>
<comment type="similarity">
    <text evidence="10">Belongs to the mitochondrion-specific ribosomal protein mL58 family.</text>
</comment>
<evidence type="ECO:0000269" key="1">
    <source>
    </source>
</evidence>
<evidence type="ECO:0000269" key="2">
    <source>
    </source>
</evidence>
<evidence type="ECO:0000269" key="3">
    <source>
    </source>
</evidence>
<evidence type="ECO:0000269" key="4">
    <source>
    </source>
</evidence>
<evidence type="ECO:0000269" key="5">
    <source>
    </source>
</evidence>
<evidence type="ECO:0000269" key="6">
    <source>
    </source>
</evidence>
<evidence type="ECO:0000269" key="7">
    <source>
    </source>
</evidence>
<evidence type="ECO:0000269" key="8">
    <source>
    </source>
</evidence>
<evidence type="ECO:0000303" key="9">
    <source>
    </source>
</evidence>
<evidence type="ECO:0000305" key="10"/>
<evidence type="ECO:0000305" key="11">
    <source>
    </source>
</evidence>
<evidence type="ECO:0000305" key="12">
    <source>
    </source>
</evidence>
<sequence length="195" mass="22392">MIGRGVCCRSFHTAGSAWKQFGFPKTQVTTIYNKTKSASNYKGYLKHRDAPGMYYQPSESIATGSVNSETIPRSFMAASDPRRGLDMPVQSTKAKQCPNVLVGKSTVNGKTYHLGPQEIDEIRKLRLDNPQKYTRKFLAAKYGISPLFVSMVSKPSEQHVQIMESRLQEIQSRWKEKRRIAREDRKRRKLLWYQA</sequence>
<protein>
    <recommendedName>
        <fullName evidence="9">Large ribosomal subunit protein mL58</fullName>
    </recommendedName>
    <alternativeName>
        <fullName>54S ribosomal protein L20, mitochondrial</fullName>
    </alternativeName>
    <alternativeName>
        <fullName>YmL20</fullName>
    </alternativeName>
</protein>
<gene>
    <name type="primary">MRPL20</name>
    <name type="ordered locus">YKR085C</name>
    <name type="ORF">YKR405</name>
</gene>
<proteinExistence type="evidence at protein level"/>
<keyword id="KW-0002">3D-structure</keyword>
<keyword id="KW-0903">Direct protein sequencing</keyword>
<keyword id="KW-0496">Mitochondrion</keyword>
<keyword id="KW-1185">Reference proteome</keyword>
<keyword id="KW-0687">Ribonucleoprotein</keyword>
<keyword id="KW-0689">Ribosomal protein</keyword>
<keyword id="KW-0809">Transit peptide</keyword>
<reference key="1">
    <citation type="journal article" date="1990" name="Nucleic Acids Res.">
        <title>Cloning and characterization of nuclear genes for two mitochondrial ribosomal proteins in Saccharomyces cerevisiae.</title>
        <authorList>
            <person name="Kitakawa M."/>
            <person name="Grohmann L."/>
            <person name="Graack H.-R."/>
            <person name="Isono K."/>
        </authorList>
    </citation>
    <scope>NUCLEOTIDE SEQUENCE [GENOMIC DNA]</scope>
    <scope>PROTEIN SEQUENCE OF 19-42</scope>
</reference>
<reference key="2">
    <citation type="journal article" date="1994" name="Yeast">
        <title>The complete sequence of an 18,002 bp segment of Saccharomyces cerevisiae chromosome XI contains the HBS1, MRP-L20 and PRP16 genes, and six new open reading frames.</title>
        <authorList>
            <person name="Garcia-Cantalejo J.M."/>
            <person name="Baladron V."/>
            <person name="Esteban P.F."/>
            <person name="Santos M.A."/>
            <person name="Bou G."/>
            <person name="Remacha M.A."/>
            <person name="Revuelta J.L."/>
            <person name="Ballesta J.P.G."/>
            <person name="Jimenez A."/>
            <person name="del Rey F."/>
        </authorList>
    </citation>
    <scope>NUCLEOTIDE SEQUENCE [GENOMIC DNA]</scope>
</reference>
<reference key="3">
    <citation type="journal article" date="1994" name="Nature">
        <title>Complete DNA sequence of yeast chromosome XI.</title>
        <authorList>
            <person name="Dujon B."/>
            <person name="Alexandraki D."/>
            <person name="Andre B."/>
            <person name="Ansorge W."/>
            <person name="Baladron V."/>
            <person name="Ballesta J.P.G."/>
            <person name="Banrevi A."/>
            <person name="Bolle P.-A."/>
            <person name="Bolotin-Fukuhara M."/>
            <person name="Bossier P."/>
            <person name="Bou G."/>
            <person name="Boyer J."/>
            <person name="Buitrago M.J."/>
            <person name="Cheret G."/>
            <person name="Colleaux L."/>
            <person name="Daignan-Fornier B."/>
            <person name="del Rey F."/>
            <person name="Dion C."/>
            <person name="Domdey H."/>
            <person name="Duesterhoeft A."/>
            <person name="Duesterhus S."/>
            <person name="Entian K.-D."/>
            <person name="Erfle H."/>
            <person name="Esteban P.F."/>
            <person name="Feldmann H."/>
            <person name="Fernandes L."/>
            <person name="Fobo G.M."/>
            <person name="Fritz C."/>
            <person name="Fukuhara H."/>
            <person name="Gabel C."/>
            <person name="Gaillon L."/>
            <person name="Garcia-Cantalejo J.M."/>
            <person name="Garcia-Ramirez J.J."/>
            <person name="Gent M.E."/>
            <person name="Ghazvini M."/>
            <person name="Goffeau A."/>
            <person name="Gonzalez A."/>
            <person name="Grothues D."/>
            <person name="Guerreiro P."/>
            <person name="Hegemann J.H."/>
            <person name="Hewitt N."/>
            <person name="Hilger F."/>
            <person name="Hollenberg C.P."/>
            <person name="Horaitis O."/>
            <person name="Indge K.J."/>
            <person name="Jacquier A."/>
            <person name="James C.M."/>
            <person name="Jauniaux J.-C."/>
            <person name="Jimenez A."/>
            <person name="Keuchel H."/>
            <person name="Kirchrath L."/>
            <person name="Kleine K."/>
            <person name="Koetter P."/>
            <person name="Legrain P."/>
            <person name="Liebl S."/>
            <person name="Louis E.J."/>
            <person name="Maia e Silva A."/>
            <person name="Marck C."/>
            <person name="Monnier A.-L."/>
            <person name="Moestl D."/>
            <person name="Mueller S."/>
            <person name="Obermaier B."/>
            <person name="Oliver S.G."/>
            <person name="Pallier C."/>
            <person name="Pascolo S."/>
            <person name="Pfeiffer F."/>
            <person name="Philippsen P."/>
            <person name="Planta R.J."/>
            <person name="Pohl F.M."/>
            <person name="Pohl T.M."/>
            <person name="Poehlmann R."/>
            <person name="Portetelle D."/>
            <person name="Purnelle B."/>
            <person name="Puzos V."/>
            <person name="Ramezani Rad M."/>
            <person name="Rasmussen S.W."/>
            <person name="Remacha M.A."/>
            <person name="Revuelta J.L."/>
            <person name="Richard G.-F."/>
            <person name="Rieger M."/>
            <person name="Rodrigues-Pousada C."/>
            <person name="Rose M."/>
            <person name="Rupp T."/>
            <person name="Santos M.A."/>
            <person name="Schwager C."/>
            <person name="Sensen C."/>
            <person name="Skala J."/>
            <person name="Soares H."/>
            <person name="Sor F."/>
            <person name="Stegemann J."/>
            <person name="Tettelin H."/>
            <person name="Thierry A."/>
            <person name="Tzermia M."/>
            <person name="Urrestarazu L.A."/>
            <person name="van Dyck L."/>
            <person name="van Vliet-Reedijk J.C."/>
            <person name="Valens M."/>
            <person name="Vandenbol M."/>
            <person name="Vilela C."/>
            <person name="Vissers S."/>
            <person name="von Wettstein D."/>
            <person name="Voss H."/>
            <person name="Wiemann S."/>
            <person name="Xu G."/>
            <person name="Zimmermann J."/>
            <person name="Haasemann M."/>
            <person name="Becker I."/>
            <person name="Mewes H.-W."/>
        </authorList>
    </citation>
    <scope>NUCLEOTIDE SEQUENCE [LARGE SCALE GENOMIC DNA]</scope>
    <source>
        <strain>ATCC 204508 / S288c</strain>
    </source>
</reference>
<reference key="4">
    <citation type="journal article" date="2014" name="G3 (Bethesda)">
        <title>The reference genome sequence of Saccharomyces cerevisiae: Then and now.</title>
        <authorList>
            <person name="Engel S.R."/>
            <person name="Dietrich F.S."/>
            <person name="Fisk D.G."/>
            <person name="Binkley G."/>
            <person name="Balakrishnan R."/>
            <person name="Costanzo M.C."/>
            <person name="Dwight S.S."/>
            <person name="Hitz B.C."/>
            <person name="Karra K."/>
            <person name="Nash R.S."/>
            <person name="Weng S."/>
            <person name="Wong E.D."/>
            <person name="Lloyd P."/>
            <person name="Skrzypek M.S."/>
            <person name="Miyasato S.R."/>
            <person name="Simison M."/>
            <person name="Cherry J.M."/>
        </authorList>
    </citation>
    <scope>GENOME REANNOTATION</scope>
    <source>
        <strain>ATCC 204508 / S288c</strain>
    </source>
</reference>
<reference key="5">
    <citation type="journal article" date="1991" name="FEBS Lett.">
        <title>Extended N-terminal sequencing of proteins of the large ribosomal subunit from yeast mitochondria.</title>
        <authorList>
            <person name="Grohmann L."/>
            <person name="Graack H.-R."/>
            <person name="Kruft V."/>
            <person name="Choli T."/>
            <person name="Goldschmidt-Reisin S."/>
            <person name="Kitakawa M."/>
        </authorList>
    </citation>
    <scope>PROTEIN SEQUENCE OF 111-123</scope>
    <scope>SUBUNIT</scope>
    <source>
        <strain>07173</strain>
    </source>
</reference>
<reference key="6">
    <citation type="journal article" date="1993" name="Eur. J. Biochem.">
        <title>Mitochondrial transport of mitoribosomal proteins, YmL8 and YmL20, in Saccharomyces cerevisiae.</title>
        <authorList>
            <person name="Matsushita Y."/>
            <person name="Isono K."/>
        </authorList>
    </citation>
    <scope>TRANSPORT INTO MITOCHONDRIA</scope>
</reference>
<reference key="7">
    <citation type="journal article" date="2002" name="Eur. J. Biochem.">
        <title>Tag-mediated isolation of yeast mitochondrial ribosome and mass spectrometric identification of its new components.</title>
        <authorList>
            <person name="Gan X."/>
            <person name="Kitakawa M."/>
            <person name="Yoshino K."/>
            <person name="Oshiro N."/>
            <person name="Yonezawa K."/>
            <person name="Isono K."/>
        </authorList>
    </citation>
    <scope>IDENTIFICATION IN THE MITOCHONDRIAL RIBOSOMAL LARGE COMPLEX</scope>
    <scope>IDENTIFICATION BY MASS SPECTROMETRY</scope>
</reference>
<reference key="8">
    <citation type="journal article" date="2003" name="Nature">
        <title>Global analysis of protein localization in budding yeast.</title>
        <authorList>
            <person name="Huh W.-K."/>
            <person name="Falvo J.V."/>
            <person name="Gerke L.C."/>
            <person name="Carroll A.S."/>
            <person name="Howson R.W."/>
            <person name="Weissman J.S."/>
            <person name="O'Shea E.K."/>
        </authorList>
    </citation>
    <scope>SUBCELLULAR LOCATION [LARGE SCALE ANALYSIS]</scope>
</reference>
<reference key="9">
    <citation type="journal article" date="2003" name="Nature">
        <title>Global analysis of protein expression in yeast.</title>
        <authorList>
            <person name="Ghaemmaghami S."/>
            <person name="Huh W.-K."/>
            <person name="Bower K."/>
            <person name="Howson R.W."/>
            <person name="Belle A."/>
            <person name="Dephoure N."/>
            <person name="O'Shea E.K."/>
            <person name="Weissman J.S."/>
        </authorList>
    </citation>
    <scope>LEVEL OF PROTEIN EXPRESSION [LARGE SCALE ANALYSIS]</scope>
</reference>
<reference key="10">
    <citation type="journal article" date="2003" name="Proc. Natl. Acad. Sci. U.S.A.">
        <title>The proteome of Saccharomyces cerevisiae mitochondria.</title>
        <authorList>
            <person name="Sickmann A."/>
            <person name="Reinders J."/>
            <person name="Wagner Y."/>
            <person name="Joppich C."/>
            <person name="Zahedi R.P."/>
            <person name="Meyer H.E."/>
            <person name="Schoenfisch B."/>
            <person name="Perschil I."/>
            <person name="Chacinska A."/>
            <person name="Guiard B."/>
            <person name="Rehling P."/>
            <person name="Pfanner N."/>
            <person name="Meisinger C."/>
        </authorList>
    </citation>
    <scope>SUBCELLULAR LOCATION [LARGE SCALE ANALYSIS]</scope>
    <source>
        <strain>ATCC 76625 / YPH499</strain>
    </source>
</reference>
<reference key="11">
    <citation type="journal article" date="2015" name="Nat. Commun.">
        <title>Organization of the mitochondrial translation machinery studied in situ by cryoelectron tomography.</title>
        <authorList>
            <person name="Pfeffer S."/>
            <person name="Woellhaf M.W."/>
            <person name="Herrmann J.M."/>
            <person name="Forster F."/>
        </authorList>
    </citation>
    <scope>SUBCELLULAR LOCATION</scope>
</reference>
<reference key="12">
    <citation type="journal article" date="2014" name="Science">
        <title>Structure of the yeast mitochondrial large ribosomal subunit.</title>
        <authorList>
            <person name="Amunts A."/>
            <person name="Brown A."/>
            <person name="Bai X.C."/>
            <person name="Llacer J.L."/>
            <person name="Hussain T."/>
            <person name="Emsley P."/>
            <person name="Long F."/>
            <person name="Murshudov G."/>
            <person name="Scheres S.H."/>
            <person name="Ramakrishnan V."/>
        </authorList>
    </citation>
    <scope>STRUCTURE BY ELECTRON MICROSCOPY (3.20 ANGSTROMS)</scope>
    <scope>SUBUNIT</scope>
</reference>
<name>RM20_YEAST</name>
<organism>
    <name type="scientific">Saccharomyces cerevisiae (strain ATCC 204508 / S288c)</name>
    <name type="common">Baker's yeast</name>
    <dbReference type="NCBI Taxonomy" id="559292"/>
    <lineage>
        <taxon>Eukaryota</taxon>
        <taxon>Fungi</taxon>
        <taxon>Dikarya</taxon>
        <taxon>Ascomycota</taxon>
        <taxon>Saccharomycotina</taxon>
        <taxon>Saccharomycetes</taxon>
        <taxon>Saccharomycetales</taxon>
        <taxon>Saccharomycetaceae</taxon>
        <taxon>Saccharomyces</taxon>
    </lineage>
</organism>
<dbReference type="EMBL" id="X53840">
    <property type="protein sequence ID" value="CAA37833.1"/>
    <property type="molecule type" value="Genomic_DNA"/>
</dbReference>
<dbReference type="EMBL" id="Z27116">
    <property type="protein sequence ID" value="CAA81636.1"/>
    <property type="molecule type" value="Genomic_DNA"/>
</dbReference>
<dbReference type="EMBL" id="Z28310">
    <property type="protein sequence ID" value="CAA82164.1"/>
    <property type="molecule type" value="Genomic_DNA"/>
</dbReference>
<dbReference type="EMBL" id="BK006944">
    <property type="protein sequence ID" value="DAA09235.1"/>
    <property type="molecule type" value="Genomic_DNA"/>
</dbReference>
<dbReference type="PIR" id="S38163">
    <property type="entry name" value="S38163"/>
</dbReference>
<dbReference type="RefSeq" id="NP_013011.1">
    <property type="nucleotide sequence ID" value="NM_001179875.1"/>
</dbReference>
<dbReference type="PDB" id="3J6B">
    <property type="method" value="EM"/>
    <property type="resolution" value="3.20 A"/>
    <property type="chains" value="a=1-195"/>
</dbReference>
<dbReference type="PDB" id="5MRC">
    <property type="method" value="EM"/>
    <property type="resolution" value="3.25 A"/>
    <property type="chains" value="a=19-195"/>
</dbReference>
<dbReference type="PDB" id="5MRE">
    <property type="method" value="EM"/>
    <property type="resolution" value="3.75 A"/>
    <property type="chains" value="a=19-195"/>
</dbReference>
<dbReference type="PDB" id="5MRF">
    <property type="method" value="EM"/>
    <property type="resolution" value="4.97 A"/>
    <property type="chains" value="a=19-195"/>
</dbReference>
<dbReference type="PDBsum" id="3J6B"/>
<dbReference type="PDBsum" id="5MRC"/>
<dbReference type="PDBsum" id="5MRE"/>
<dbReference type="PDBsum" id="5MRF"/>
<dbReference type="EMDB" id="EMD-3551"/>
<dbReference type="EMDB" id="EMD-3552"/>
<dbReference type="EMDB" id="EMD-3553"/>
<dbReference type="SMR" id="P22354"/>
<dbReference type="BioGRID" id="34216">
    <property type="interactions" value="160"/>
</dbReference>
<dbReference type="ComplexPortal" id="CPX-1602">
    <property type="entry name" value="54S mitochondrial large ribosomal subunit"/>
</dbReference>
<dbReference type="DIP" id="DIP-6793N"/>
<dbReference type="FunCoup" id="P22354">
    <property type="interactions" value="208"/>
</dbReference>
<dbReference type="IntAct" id="P22354">
    <property type="interactions" value="67"/>
</dbReference>
<dbReference type="MINT" id="P22354"/>
<dbReference type="STRING" id="4932.YKR085C"/>
<dbReference type="GlyGen" id="P22354">
    <property type="glycosylation" value="1 site, 1 O-linked glycan (1 site)"/>
</dbReference>
<dbReference type="iPTMnet" id="P22354"/>
<dbReference type="PaxDb" id="4932-YKR085C"/>
<dbReference type="PeptideAtlas" id="P22354"/>
<dbReference type="EnsemblFungi" id="YKR085C_mRNA">
    <property type="protein sequence ID" value="YKR085C"/>
    <property type="gene ID" value="YKR085C"/>
</dbReference>
<dbReference type="GeneID" id="853960"/>
<dbReference type="KEGG" id="sce:YKR085C"/>
<dbReference type="AGR" id="SGD:S000001793"/>
<dbReference type="SGD" id="S000001793">
    <property type="gene designation" value="MRPL20"/>
</dbReference>
<dbReference type="VEuPathDB" id="FungiDB:YKR085C"/>
<dbReference type="eggNOG" id="ENOG502S0A4">
    <property type="taxonomic scope" value="Eukaryota"/>
</dbReference>
<dbReference type="HOGENOM" id="CLU_089054_1_0_1"/>
<dbReference type="InParanoid" id="P22354"/>
<dbReference type="OMA" id="PEKYTRK"/>
<dbReference type="OrthoDB" id="6021263at2759"/>
<dbReference type="BioCyc" id="YEAST:G3O-32048-MONOMER"/>
<dbReference type="BioGRID-ORCS" id="853960">
    <property type="hits" value="8 hits in 10 CRISPR screens"/>
</dbReference>
<dbReference type="PRO" id="PR:P22354"/>
<dbReference type="Proteomes" id="UP000002311">
    <property type="component" value="Chromosome XI"/>
</dbReference>
<dbReference type="RNAct" id="P22354">
    <property type="molecule type" value="protein"/>
</dbReference>
<dbReference type="GO" id="GO:0005743">
    <property type="term" value="C:mitochondrial inner membrane"/>
    <property type="evidence" value="ECO:0000303"/>
    <property type="project" value="ComplexPortal"/>
</dbReference>
<dbReference type="GO" id="GO:0005762">
    <property type="term" value="C:mitochondrial large ribosomal subunit"/>
    <property type="evidence" value="ECO:0000314"/>
    <property type="project" value="SGD"/>
</dbReference>
<dbReference type="GO" id="GO:0005739">
    <property type="term" value="C:mitochondrion"/>
    <property type="evidence" value="ECO:0007005"/>
    <property type="project" value="SGD"/>
</dbReference>
<dbReference type="GO" id="GO:0003735">
    <property type="term" value="F:structural constituent of ribosome"/>
    <property type="evidence" value="ECO:0000314"/>
    <property type="project" value="SGD"/>
</dbReference>
<dbReference type="GO" id="GO:0032543">
    <property type="term" value="P:mitochondrial translation"/>
    <property type="evidence" value="ECO:0000303"/>
    <property type="project" value="ComplexPortal"/>
</dbReference>
<dbReference type="InterPro" id="IPR024388">
    <property type="entry name" value="Ribosomal_mL58"/>
</dbReference>
<dbReference type="PANTHER" id="PTHR28266">
    <property type="entry name" value="54S RIBOSOMAL PROTEIN L20, MITOCHONDRIAL"/>
    <property type="match status" value="1"/>
</dbReference>
<dbReference type="PANTHER" id="PTHR28266:SF1">
    <property type="entry name" value="LARGE RIBOSOMAL SUBUNIT PROTEIN ML58"/>
    <property type="match status" value="1"/>
</dbReference>
<dbReference type="Pfam" id="PF12824">
    <property type="entry name" value="MRP-L20"/>
    <property type="match status" value="1"/>
</dbReference>